<feature type="chain" id="PRO_0000276875" description="Small ribosomal subunit protein bS18c">
    <location>
        <begin position="1"/>
        <end position="101"/>
    </location>
</feature>
<feature type="region of interest" description="Disordered" evidence="2">
    <location>
        <begin position="1"/>
        <end position="23"/>
    </location>
</feature>
<feature type="compositionally biased region" description="Basic residues" evidence="2">
    <location>
        <begin position="1"/>
        <end position="19"/>
    </location>
</feature>
<comment type="subunit">
    <text>Part of the 30S ribosomal subunit.</text>
</comment>
<comment type="subcellular location">
    <subcellularLocation>
        <location>Plastid</location>
        <location>Chloroplast</location>
    </subcellularLocation>
</comment>
<comment type="similarity">
    <text evidence="1">Belongs to the bacterial ribosomal protein bS18 family.</text>
</comment>
<sequence length="101" mass="11944">MDKSKRLFRKSKRSFRRRLPPIGSGDRIDYRNMSLISQFISEQGKILSRRVNRLTLKQQRLITIAIKQARILSSLPFLNNEKQFEKTESIPRTTGPRTRNK</sequence>
<protein>
    <recommendedName>
        <fullName evidence="1">Small ribosomal subunit protein bS18c</fullName>
    </recommendedName>
    <alternativeName>
        <fullName evidence="3">30S ribosomal protein S18, chloroplastic</fullName>
    </alternativeName>
</protein>
<accession>Q0G9J7</accession>
<name>RR18_LIRTU</name>
<geneLocation type="chloroplast"/>
<gene>
    <name evidence="1" type="primary">rps18</name>
</gene>
<proteinExistence type="inferred from homology"/>
<evidence type="ECO:0000255" key="1">
    <source>
        <dbReference type="HAMAP-Rule" id="MF_00270"/>
    </source>
</evidence>
<evidence type="ECO:0000256" key="2">
    <source>
        <dbReference type="SAM" id="MobiDB-lite"/>
    </source>
</evidence>
<evidence type="ECO:0000305" key="3"/>
<reference key="1">
    <citation type="journal article" date="2006" name="BMC Evol. Biol.">
        <title>Complete plastid genome sequences of Drimys, Liriodendron, and Piper: implications for the phylogenetic relationships of magnoliids.</title>
        <authorList>
            <person name="Cai Z."/>
            <person name="Penaflor C."/>
            <person name="Kuehl J.V."/>
            <person name="Leebens-Mack J."/>
            <person name="Carlson J.E."/>
            <person name="dePamphilis C.W."/>
            <person name="Boore J.L."/>
            <person name="Jansen R.K."/>
        </authorList>
    </citation>
    <scope>NUCLEOTIDE SEQUENCE [LARGE SCALE GENOMIC DNA]</scope>
</reference>
<keyword id="KW-0150">Chloroplast</keyword>
<keyword id="KW-0934">Plastid</keyword>
<keyword id="KW-0687">Ribonucleoprotein</keyword>
<keyword id="KW-0689">Ribosomal protein</keyword>
<keyword id="KW-0694">RNA-binding</keyword>
<keyword id="KW-0699">rRNA-binding</keyword>
<dbReference type="EMBL" id="DQ899947">
    <property type="protein sequence ID" value="ABI32531.1"/>
    <property type="molecule type" value="Genomic_DNA"/>
</dbReference>
<dbReference type="RefSeq" id="YP_740224.1">
    <property type="nucleotide sequence ID" value="NC_008326.1"/>
</dbReference>
<dbReference type="SMR" id="Q0G9J7"/>
<dbReference type="GeneID" id="4266648"/>
<dbReference type="GO" id="GO:0009507">
    <property type="term" value="C:chloroplast"/>
    <property type="evidence" value="ECO:0007669"/>
    <property type="project" value="UniProtKB-SubCell"/>
</dbReference>
<dbReference type="GO" id="GO:0005763">
    <property type="term" value="C:mitochondrial small ribosomal subunit"/>
    <property type="evidence" value="ECO:0007669"/>
    <property type="project" value="TreeGrafter"/>
</dbReference>
<dbReference type="GO" id="GO:0070181">
    <property type="term" value="F:small ribosomal subunit rRNA binding"/>
    <property type="evidence" value="ECO:0007669"/>
    <property type="project" value="TreeGrafter"/>
</dbReference>
<dbReference type="GO" id="GO:0003735">
    <property type="term" value="F:structural constituent of ribosome"/>
    <property type="evidence" value="ECO:0007669"/>
    <property type="project" value="InterPro"/>
</dbReference>
<dbReference type="GO" id="GO:0006412">
    <property type="term" value="P:translation"/>
    <property type="evidence" value="ECO:0007669"/>
    <property type="project" value="UniProtKB-UniRule"/>
</dbReference>
<dbReference type="FunFam" id="4.10.640.10:FF:000002">
    <property type="entry name" value="30S ribosomal protein S18, chloroplastic"/>
    <property type="match status" value="1"/>
</dbReference>
<dbReference type="Gene3D" id="4.10.640.10">
    <property type="entry name" value="Ribosomal protein S18"/>
    <property type="match status" value="1"/>
</dbReference>
<dbReference type="HAMAP" id="MF_00270">
    <property type="entry name" value="Ribosomal_bS18"/>
    <property type="match status" value="1"/>
</dbReference>
<dbReference type="InterPro" id="IPR001648">
    <property type="entry name" value="Ribosomal_bS18"/>
</dbReference>
<dbReference type="InterPro" id="IPR018275">
    <property type="entry name" value="Ribosomal_bS18_CS"/>
</dbReference>
<dbReference type="InterPro" id="IPR036870">
    <property type="entry name" value="Ribosomal_bS18_sf"/>
</dbReference>
<dbReference type="NCBIfam" id="TIGR00165">
    <property type="entry name" value="S18"/>
    <property type="match status" value="1"/>
</dbReference>
<dbReference type="PANTHER" id="PTHR13479">
    <property type="entry name" value="30S RIBOSOMAL PROTEIN S18"/>
    <property type="match status" value="1"/>
</dbReference>
<dbReference type="PANTHER" id="PTHR13479:SF40">
    <property type="entry name" value="SMALL RIBOSOMAL SUBUNIT PROTEIN BS18M"/>
    <property type="match status" value="1"/>
</dbReference>
<dbReference type="Pfam" id="PF01084">
    <property type="entry name" value="Ribosomal_S18"/>
    <property type="match status" value="1"/>
</dbReference>
<dbReference type="PRINTS" id="PR00974">
    <property type="entry name" value="RIBOSOMALS18"/>
</dbReference>
<dbReference type="SUPFAM" id="SSF46911">
    <property type="entry name" value="Ribosomal protein S18"/>
    <property type="match status" value="1"/>
</dbReference>
<dbReference type="PROSITE" id="PS00057">
    <property type="entry name" value="RIBOSOMAL_S18"/>
    <property type="match status" value="1"/>
</dbReference>
<organism>
    <name type="scientific">Liriodendron tulipifera</name>
    <name type="common">Tuliptree</name>
    <name type="synonym">Tulip poplar</name>
    <dbReference type="NCBI Taxonomy" id="3415"/>
    <lineage>
        <taxon>Eukaryota</taxon>
        <taxon>Viridiplantae</taxon>
        <taxon>Streptophyta</taxon>
        <taxon>Embryophyta</taxon>
        <taxon>Tracheophyta</taxon>
        <taxon>Spermatophyta</taxon>
        <taxon>Magnoliopsida</taxon>
        <taxon>Magnoliidae</taxon>
        <taxon>Magnoliales</taxon>
        <taxon>Magnoliaceae</taxon>
        <taxon>Liriodendron</taxon>
    </lineage>
</organism>